<evidence type="ECO:0000255" key="1">
    <source>
        <dbReference type="HAMAP-Rule" id="MF_01375"/>
    </source>
</evidence>
<keyword id="KW-0378">Hydrolase</keyword>
<keyword id="KW-0460">Magnesium</keyword>
<keyword id="KW-0479">Metal-binding</keyword>
<keyword id="KW-0704">Schiff base</keyword>
<dbReference type="EC" id="3.11.1.1" evidence="1"/>
<dbReference type="EMBL" id="CP000764">
    <property type="protein sequence ID" value="ABS21377.1"/>
    <property type="molecule type" value="Genomic_DNA"/>
</dbReference>
<dbReference type="RefSeq" id="WP_011984130.1">
    <property type="nucleotide sequence ID" value="NC_009674.1"/>
</dbReference>
<dbReference type="SMR" id="A7GML9"/>
<dbReference type="STRING" id="315749.Bcer98_1051"/>
<dbReference type="GeneID" id="33896409"/>
<dbReference type="KEGG" id="bcy:Bcer98_1051"/>
<dbReference type="eggNOG" id="COG0637">
    <property type="taxonomic scope" value="Bacteria"/>
</dbReference>
<dbReference type="HOGENOM" id="CLU_045011_12_0_9"/>
<dbReference type="OrthoDB" id="5504491at2"/>
<dbReference type="Proteomes" id="UP000002300">
    <property type="component" value="Chromosome"/>
</dbReference>
<dbReference type="GO" id="GO:0005829">
    <property type="term" value="C:cytosol"/>
    <property type="evidence" value="ECO:0007669"/>
    <property type="project" value="TreeGrafter"/>
</dbReference>
<dbReference type="GO" id="GO:0000287">
    <property type="term" value="F:magnesium ion binding"/>
    <property type="evidence" value="ECO:0007669"/>
    <property type="project" value="UniProtKB-UniRule"/>
</dbReference>
<dbReference type="GO" id="GO:0008967">
    <property type="term" value="F:phosphoglycolate phosphatase activity"/>
    <property type="evidence" value="ECO:0007669"/>
    <property type="project" value="TreeGrafter"/>
</dbReference>
<dbReference type="GO" id="GO:0050194">
    <property type="term" value="F:phosphonoacetaldehyde hydrolase activity"/>
    <property type="evidence" value="ECO:0007669"/>
    <property type="project" value="UniProtKB-UniRule"/>
</dbReference>
<dbReference type="GO" id="GO:0006281">
    <property type="term" value="P:DNA repair"/>
    <property type="evidence" value="ECO:0007669"/>
    <property type="project" value="TreeGrafter"/>
</dbReference>
<dbReference type="GO" id="GO:0019700">
    <property type="term" value="P:organic phosphonate catabolic process"/>
    <property type="evidence" value="ECO:0007669"/>
    <property type="project" value="InterPro"/>
</dbReference>
<dbReference type="CDD" id="cd02586">
    <property type="entry name" value="HAD_PHN"/>
    <property type="match status" value="1"/>
</dbReference>
<dbReference type="FunFam" id="1.10.150.240:FF:000006">
    <property type="entry name" value="Phosphonoacetaldehyde hydrolase"/>
    <property type="match status" value="1"/>
</dbReference>
<dbReference type="FunFam" id="3.40.50.1000:FF:000072">
    <property type="entry name" value="Phosphonoacetaldehyde hydrolase"/>
    <property type="match status" value="1"/>
</dbReference>
<dbReference type="Gene3D" id="3.40.50.1000">
    <property type="entry name" value="HAD superfamily/HAD-like"/>
    <property type="match status" value="1"/>
</dbReference>
<dbReference type="Gene3D" id="1.10.150.240">
    <property type="entry name" value="Putative phosphatase, domain 2"/>
    <property type="match status" value="1"/>
</dbReference>
<dbReference type="HAMAP" id="MF_01375">
    <property type="entry name" value="PhnX"/>
    <property type="match status" value="1"/>
</dbReference>
<dbReference type="InterPro" id="IPR050155">
    <property type="entry name" value="HAD-like_hydrolase_sf"/>
</dbReference>
<dbReference type="InterPro" id="IPR036412">
    <property type="entry name" value="HAD-like_sf"/>
</dbReference>
<dbReference type="InterPro" id="IPR006439">
    <property type="entry name" value="HAD-SF_hydro_IA"/>
</dbReference>
<dbReference type="InterPro" id="IPR041492">
    <property type="entry name" value="HAD_2"/>
</dbReference>
<dbReference type="InterPro" id="IPR023214">
    <property type="entry name" value="HAD_sf"/>
</dbReference>
<dbReference type="InterPro" id="IPR023198">
    <property type="entry name" value="PGP-like_dom2"/>
</dbReference>
<dbReference type="InterPro" id="IPR006323">
    <property type="entry name" value="Phosphonoacetald_hydro"/>
</dbReference>
<dbReference type="NCBIfam" id="TIGR01549">
    <property type="entry name" value="HAD-SF-IA-v1"/>
    <property type="match status" value="1"/>
</dbReference>
<dbReference type="NCBIfam" id="TIGR01422">
    <property type="entry name" value="phosphonatase"/>
    <property type="match status" value="1"/>
</dbReference>
<dbReference type="PANTHER" id="PTHR43434">
    <property type="entry name" value="PHOSPHOGLYCOLATE PHOSPHATASE"/>
    <property type="match status" value="1"/>
</dbReference>
<dbReference type="PANTHER" id="PTHR43434:SF19">
    <property type="entry name" value="PHOSPHONOACETALDEHYDE HYDROLASE"/>
    <property type="match status" value="1"/>
</dbReference>
<dbReference type="Pfam" id="PF13419">
    <property type="entry name" value="HAD_2"/>
    <property type="match status" value="1"/>
</dbReference>
<dbReference type="SFLD" id="SFLDG01135">
    <property type="entry name" value="C1.5.6:_HAD__Beta-PGM__Phospha"/>
    <property type="match status" value="1"/>
</dbReference>
<dbReference type="SFLD" id="SFLDF00038">
    <property type="entry name" value="phosphonoacetaldehyde_hydrolas"/>
    <property type="match status" value="1"/>
</dbReference>
<dbReference type="SUPFAM" id="SSF56784">
    <property type="entry name" value="HAD-like"/>
    <property type="match status" value="1"/>
</dbReference>
<comment type="function">
    <text evidence="1">Involved in phosphonate degradation.</text>
</comment>
<comment type="catalytic activity">
    <reaction evidence="1">
        <text>phosphonoacetaldehyde + H2O = acetaldehyde + phosphate + H(+)</text>
        <dbReference type="Rhea" id="RHEA:18905"/>
        <dbReference type="ChEBI" id="CHEBI:15343"/>
        <dbReference type="ChEBI" id="CHEBI:15377"/>
        <dbReference type="ChEBI" id="CHEBI:15378"/>
        <dbReference type="ChEBI" id="CHEBI:43474"/>
        <dbReference type="ChEBI" id="CHEBI:58383"/>
        <dbReference type="EC" id="3.11.1.1"/>
    </reaction>
</comment>
<comment type="cofactor">
    <cofactor evidence="1">
        <name>Mg(2+)</name>
        <dbReference type="ChEBI" id="CHEBI:18420"/>
    </cofactor>
    <text evidence="1">Binds 1 Mg(2+) ion per subunit.</text>
</comment>
<comment type="subunit">
    <text evidence="1">Homodimer.</text>
</comment>
<comment type="similarity">
    <text evidence="1">Belongs to the HAD-like hydrolase superfamily. PhnX family.</text>
</comment>
<reference key="1">
    <citation type="journal article" date="2008" name="Chem. Biol. Interact.">
        <title>Extending the Bacillus cereus group genomics to putative food-borne pathogens of different toxicity.</title>
        <authorList>
            <person name="Lapidus A."/>
            <person name="Goltsman E."/>
            <person name="Auger S."/>
            <person name="Galleron N."/>
            <person name="Segurens B."/>
            <person name="Dossat C."/>
            <person name="Land M.L."/>
            <person name="Broussolle V."/>
            <person name="Brillard J."/>
            <person name="Guinebretiere M.-H."/>
            <person name="Sanchis V."/>
            <person name="Nguen-the C."/>
            <person name="Lereclus D."/>
            <person name="Richardson P."/>
            <person name="Wincker P."/>
            <person name="Weissenbach J."/>
            <person name="Ehrlich S.D."/>
            <person name="Sorokin A."/>
        </authorList>
    </citation>
    <scope>NUCLEOTIDE SEQUENCE [LARGE SCALE GENOMIC DNA]</scope>
    <source>
        <strain>DSM 22905 / CIP 110041 / 391-98 / NVH 391-98</strain>
    </source>
</reference>
<protein>
    <recommendedName>
        <fullName evidence="1">Phosphonoacetaldehyde hydrolase</fullName>
        <shortName evidence="1">Phosphonatase</shortName>
        <ecNumber evidence="1">3.11.1.1</ecNumber>
    </recommendedName>
    <alternativeName>
        <fullName evidence="1">Phosphonoacetaldehyde phosphonohydrolase</fullName>
    </alternativeName>
</protein>
<accession>A7GML9</accession>
<name>PHNX_BACCN</name>
<feature type="chain" id="PRO_1000087288" description="Phosphonoacetaldehyde hydrolase">
    <location>
        <begin position="1"/>
        <end position="264"/>
    </location>
</feature>
<feature type="active site" description="Nucleophile" evidence="1">
    <location>
        <position position="9"/>
    </location>
</feature>
<feature type="active site" description="Schiff-base intermediate with substrate" evidence="1">
    <location>
        <position position="50"/>
    </location>
</feature>
<feature type="binding site" evidence="1">
    <location>
        <position position="9"/>
    </location>
    <ligand>
        <name>Mg(2+)</name>
        <dbReference type="ChEBI" id="CHEBI:18420"/>
    </ligand>
</feature>
<feature type="binding site" evidence="1">
    <location>
        <position position="11"/>
    </location>
    <ligand>
        <name>Mg(2+)</name>
        <dbReference type="ChEBI" id="CHEBI:18420"/>
    </ligand>
</feature>
<feature type="binding site" evidence="1">
    <location>
        <position position="183"/>
    </location>
    <ligand>
        <name>Mg(2+)</name>
        <dbReference type="ChEBI" id="CHEBI:18420"/>
    </ligand>
</feature>
<gene>
    <name evidence="1" type="primary">phnX</name>
    <name type="ordered locus">Bcer98_1051</name>
</gene>
<proteinExistence type="inferred from homology"/>
<sequence>MKIEAVIFDWAGTTVDYGCFAPLEVFMEIFKNRGVMITAEEARRPMGLLKIDHVRALTEMPRIRGEWERVFGQLPTEADVQEMYEEFEEILFSILPRYATPISGVKEVVTYLRSQGIKIGSTTGYTREMMDIVAREAKAQGYEPDYLVTPDDVPAGRPYPWMCYQNAMQLNVYPMKHMVKVGDTISDMKEGRNAGMWTVGVILGSSELGLTEKEVESMDLVALQERMEVVRKRFIESGAHYVIETMKELPQVIEYIEKQEFIIS</sequence>
<organism>
    <name type="scientific">Bacillus cytotoxicus (strain DSM 22905 / CIP 110041 / 391-98 / NVH 391-98)</name>
    <dbReference type="NCBI Taxonomy" id="315749"/>
    <lineage>
        <taxon>Bacteria</taxon>
        <taxon>Bacillati</taxon>
        <taxon>Bacillota</taxon>
        <taxon>Bacilli</taxon>
        <taxon>Bacillales</taxon>
        <taxon>Bacillaceae</taxon>
        <taxon>Bacillus</taxon>
        <taxon>Bacillus cereus group</taxon>
    </lineage>
</organism>